<gene>
    <name type="ORF">ARB_05157</name>
</gene>
<keyword id="KW-0147">Chitin-binding</keyword>
<keyword id="KW-1185">Reference proteome</keyword>
<keyword id="KW-0677">Repeat</keyword>
<keyword id="KW-0964">Secreted</keyword>
<keyword id="KW-0732">Signal</keyword>
<keyword id="KW-0843">Virulence</keyword>
<proteinExistence type="evidence at protein level"/>
<organism>
    <name type="scientific">Arthroderma benhamiae (strain ATCC MYA-4681 / CBS 112371)</name>
    <name type="common">Trichophyton mentagrophytes</name>
    <dbReference type="NCBI Taxonomy" id="663331"/>
    <lineage>
        <taxon>Eukaryota</taxon>
        <taxon>Fungi</taxon>
        <taxon>Dikarya</taxon>
        <taxon>Ascomycota</taxon>
        <taxon>Pezizomycotina</taxon>
        <taxon>Eurotiomycetes</taxon>
        <taxon>Eurotiomycetidae</taxon>
        <taxon>Onygenales</taxon>
        <taxon>Arthrodermataceae</taxon>
        <taxon>Trichophyton</taxon>
    </lineage>
</organism>
<dbReference type="EMBL" id="ABSU01000002">
    <property type="protein sequence ID" value="EFE36219.1"/>
    <property type="molecule type" value="Genomic_DNA"/>
</dbReference>
<dbReference type="RefSeq" id="XP_003016864.1">
    <property type="nucleotide sequence ID" value="XM_003016818.1"/>
</dbReference>
<dbReference type="SMR" id="D4ALG0"/>
<dbReference type="STRING" id="663331.D4ALG0"/>
<dbReference type="GeneID" id="9526341"/>
<dbReference type="KEGG" id="abe:ARB_05157"/>
<dbReference type="eggNOG" id="KOG2806">
    <property type="taxonomic scope" value="Eukaryota"/>
</dbReference>
<dbReference type="HOGENOM" id="CLU_010591_8_0_1"/>
<dbReference type="OMA" id="MWANAYV"/>
<dbReference type="Proteomes" id="UP000008866">
    <property type="component" value="Unassembled WGS sequence"/>
</dbReference>
<dbReference type="GO" id="GO:0005576">
    <property type="term" value="C:extracellular region"/>
    <property type="evidence" value="ECO:0007669"/>
    <property type="project" value="UniProtKB-SubCell"/>
</dbReference>
<dbReference type="GO" id="GO:0008061">
    <property type="term" value="F:chitin binding"/>
    <property type="evidence" value="ECO:0007669"/>
    <property type="project" value="UniProtKB-KW"/>
</dbReference>
<dbReference type="CDD" id="cd00118">
    <property type="entry name" value="LysM"/>
    <property type="match status" value="3"/>
</dbReference>
<dbReference type="Gene3D" id="3.10.350.10">
    <property type="entry name" value="LysM domain"/>
    <property type="match status" value="4"/>
</dbReference>
<dbReference type="InterPro" id="IPR052210">
    <property type="entry name" value="LysM1-like"/>
</dbReference>
<dbReference type="InterPro" id="IPR018392">
    <property type="entry name" value="LysM_dom"/>
</dbReference>
<dbReference type="InterPro" id="IPR036779">
    <property type="entry name" value="LysM_dom_sf"/>
</dbReference>
<dbReference type="PANTHER" id="PTHR34997">
    <property type="entry name" value="AM15"/>
    <property type="match status" value="1"/>
</dbReference>
<dbReference type="PANTHER" id="PTHR34997:SF2">
    <property type="entry name" value="LYSM DOMAIN-CONTAINING PROTEIN-RELATED"/>
    <property type="match status" value="1"/>
</dbReference>
<dbReference type="Pfam" id="PF01476">
    <property type="entry name" value="LysM"/>
    <property type="match status" value="4"/>
</dbReference>
<dbReference type="SMART" id="SM00257">
    <property type="entry name" value="LysM"/>
    <property type="match status" value="4"/>
</dbReference>
<dbReference type="SUPFAM" id="SSF54106">
    <property type="entry name" value="LysM domain"/>
    <property type="match status" value="4"/>
</dbReference>
<dbReference type="PROSITE" id="PS51782">
    <property type="entry name" value="LYSM"/>
    <property type="match status" value="4"/>
</dbReference>
<protein>
    <recommendedName>
        <fullName evidence="5">LysM domain-containing protein ARB_05157</fullName>
    </recommendedName>
</protein>
<sequence length="458" mass="49044">MVSLKVCFLLLASSELAFGAAPGARSRRRGTAPANPYDKDTTSYCTWWLDYNEELPCDQVLQANSITLEKFRRWVSGGQSNTPINQWENHKANHKAKNPSITGNCEGMTVGKSYCVEAAFEPTPTASPTGPSGPTGTPGTIETPLPTQPEIAPNCDAFHLVKQGEDCGTISATYGITSAQFLAWNPSAGKDCTGLWANAYACVSIVGHEPPKTTSQAPQPTPTKPSNGIETPLPTQPKIVDNCDKFHLVQSGEGCAAITSKYGISLAQFTQWNPAAGSNCEGLWANAYACVSIIGHEPMPTPTKPSNGIETPLPTQPEIVDNCNKFYLVQSGDTCTTIVSKYGITLSDFTKWNPKAGNTCAGLWANAYSCVSIIGYTPKPSPTPTPTKPPNGIQTPTPIQNGMVTNCNKFHFVENGNTCPVIQAKYKVTLADLVRWNPAIKADCTGLWAKTYLCVGTL</sequence>
<accession>D4ALG0</accession>
<name>LYSM1_ARTBC</name>
<comment type="function">
    <text evidence="6">Might have a role in sequestration of chitin oligosaccharides (breakdown products of fungal cell walls that are released during invasion and act as triggers of host immunity) to dampen host defense.</text>
</comment>
<comment type="subcellular location">
    <subcellularLocation>
        <location evidence="4">Secreted</location>
    </subcellularLocation>
</comment>
<comment type="domain">
    <text evidence="6">The LysM domains bind chitin and potentially related carbohydrates, and might be involved in damping host defense.</text>
</comment>
<reference key="1">
    <citation type="journal article" date="2011" name="Genome Biol.">
        <title>Comparative and functional genomics provide insights into the pathogenicity of dermatophytic fungi.</title>
        <authorList>
            <person name="Burmester A."/>
            <person name="Shelest E."/>
            <person name="Gloeckner G."/>
            <person name="Heddergott C."/>
            <person name="Schindler S."/>
            <person name="Staib P."/>
            <person name="Heidel A."/>
            <person name="Felder M."/>
            <person name="Petzold A."/>
            <person name="Szafranski K."/>
            <person name="Feuermann M."/>
            <person name="Pedruzzi I."/>
            <person name="Priebe S."/>
            <person name="Groth M."/>
            <person name="Winkler R."/>
            <person name="Li W."/>
            <person name="Kniemeyer O."/>
            <person name="Schroeckh V."/>
            <person name="Hertweck C."/>
            <person name="Hube B."/>
            <person name="White T.C."/>
            <person name="Platzer M."/>
            <person name="Guthke R."/>
            <person name="Heitman J."/>
            <person name="Woestemeyer J."/>
            <person name="Zipfel P.F."/>
            <person name="Monod M."/>
            <person name="Brakhage A.A."/>
        </authorList>
    </citation>
    <scope>NUCLEOTIDE SEQUENCE [LARGE SCALE GENOMIC DNA]</scope>
    <source>
        <strain>ATCC MYA-4681 / CBS 112371</strain>
    </source>
</reference>
<reference key="2">
    <citation type="journal article" date="2011" name="Proteomics">
        <title>Identification of novel secreted proteases during extracellular proteolysis by dermatophytes at acidic pH.</title>
        <authorList>
            <person name="Sriranganadane D."/>
            <person name="Waridel P."/>
            <person name="Salamin K."/>
            <person name="Feuermann M."/>
            <person name="Mignon B."/>
            <person name="Staib P."/>
            <person name="Neuhaus J.M."/>
            <person name="Quadroni M."/>
            <person name="Monod M."/>
        </authorList>
    </citation>
    <scope>IDENTIFICATION BY MASS SPECTROMETRY</scope>
    <scope>SUBCELLULAR LOCATION</scope>
</reference>
<reference key="3">
    <citation type="journal article" date="2009" name="Trends Microbiol.">
        <title>Fungal LysM effectors: extinguishers of host immunity?</title>
        <authorList>
            <person name="de Jonge R."/>
            <person name="Thomma B.P."/>
        </authorList>
    </citation>
    <scope>DOMAIN</scope>
    <scope>FUNCTION PREDICTION</scope>
</reference>
<evidence type="ECO:0000255" key="1"/>
<evidence type="ECO:0000255" key="2">
    <source>
        <dbReference type="PROSITE-ProRule" id="PRU01118"/>
    </source>
</evidence>
<evidence type="ECO:0000256" key="3">
    <source>
        <dbReference type="SAM" id="MobiDB-lite"/>
    </source>
</evidence>
<evidence type="ECO:0000269" key="4">
    <source>
    </source>
</evidence>
<evidence type="ECO:0000305" key="5"/>
<evidence type="ECO:0000305" key="6">
    <source>
    </source>
</evidence>
<feature type="signal peptide" evidence="1">
    <location>
        <begin position="1"/>
        <end position="19"/>
    </location>
</feature>
<feature type="chain" id="PRO_0000434925" description="LysM domain-containing protein ARB_05157">
    <location>
        <begin position="20"/>
        <end position="458"/>
    </location>
</feature>
<feature type="domain" description="LysM 1" evidence="2">
    <location>
        <begin position="157"/>
        <end position="203"/>
    </location>
</feature>
<feature type="domain" description="LysM 2" evidence="2">
    <location>
        <begin position="245"/>
        <end position="291"/>
    </location>
</feature>
<feature type="domain" description="LysM 3" evidence="2">
    <location>
        <begin position="325"/>
        <end position="371"/>
    </location>
</feature>
<feature type="domain" description="LysM 4" evidence="2">
    <location>
        <begin position="409"/>
        <end position="455"/>
    </location>
</feature>
<feature type="region of interest" description="Disordered" evidence="3">
    <location>
        <begin position="210"/>
        <end position="232"/>
    </location>
</feature>
<feature type="compositionally biased region" description="Polar residues" evidence="3">
    <location>
        <begin position="212"/>
        <end position="229"/>
    </location>
</feature>